<reference key="1">
    <citation type="journal article" date="2002" name="Proc. Natl. Acad. Sci. U.S.A.">
        <title>Extensive mosaic structure revealed by the complete genome sequence of uropathogenic Escherichia coli.</title>
        <authorList>
            <person name="Welch R.A."/>
            <person name="Burland V."/>
            <person name="Plunkett G. III"/>
            <person name="Redford P."/>
            <person name="Roesch P."/>
            <person name="Rasko D."/>
            <person name="Buckles E.L."/>
            <person name="Liou S.-R."/>
            <person name="Boutin A."/>
            <person name="Hackett J."/>
            <person name="Stroud D."/>
            <person name="Mayhew G.F."/>
            <person name="Rose D.J."/>
            <person name="Zhou S."/>
            <person name="Schwartz D.C."/>
            <person name="Perna N.T."/>
            <person name="Mobley H.L.T."/>
            <person name="Donnenberg M.S."/>
            <person name="Blattner F.R."/>
        </authorList>
    </citation>
    <scope>NUCLEOTIDE SEQUENCE [LARGE SCALE GENOMIC DNA]</scope>
    <source>
        <strain>CFT073 / ATCC 700928 / UPEC</strain>
    </source>
</reference>
<evidence type="ECO:0000250" key="1"/>
<evidence type="ECO:0000255" key="2">
    <source>
        <dbReference type="PROSITE-ProRule" id="PRU00675"/>
    </source>
</evidence>
<sequence>MKKIDAIIKPFKLDDVREALAEVGITGMTVTEVKGFGRQKGHTELYRGAEYMVDFLPKVKIEIVVPDDIVDTCVDTIIRTAQTGKIGDGKIFVFDVARVIRIRTGEEDDAAI</sequence>
<accession>P0A9Z2</accession>
<accession>P05826</accession>
<dbReference type="EMBL" id="AE014075">
    <property type="protein sequence ID" value="AAN81525.1"/>
    <property type="molecule type" value="Genomic_DNA"/>
</dbReference>
<dbReference type="RefSeq" id="WP_000717694.1">
    <property type="nucleotide sequence ID" value="NZ_CP051263.1"/>
</dbReference>
<dbReference type="SMR" id="P0A9Z2"/>
<dbReference type="STRING" id="199310.c3076"/>
<dbReference type="GeneID" id="93774582"/>
<dbReference type="KEGG" id="ecc:c3076"/>
<dbReference type="eggNOG" id="COG0347">
    <property type="taxonomic scope" value="Bacteria"/>
</dbReference>
<dbReference type="HOGENOM" id="CLU_082268_0_0_6"/>
<dbReference type="BioCyc" id="ECOL199310:C3076-MONOMER"/>
<dbReference type="Proteomes" id="UP000001410">
    <property type="component" value="Chromosome"/>
</dbReference>
<dbReference type="GO" id="GO:0005829">
    <property type="term" value="C:cytosol"/>
    <property type="evidence" value="ECO:0007669"/>
    <property type="project" value="TreeGrafter"/>
</dbReference>
<dbReference type="GO" id="GO:0005524">
    <property type="term" value="F:ATP binding"/>
    <property type="evidence" value="ECO:0007669"/>
    <property type="project" value="TreeGrafter"/>
</dbReference>
<dbReference type="GO" id="GO:0030234">
    <property type="term" value="F:enzyme regulator activity"/>
    <property type="evidence" value="ECO:0007669"/>
    <property type="project" value="InterPro"/>
</dbReference>
<dbReference type="GO" id="GO:0006808">
    <property type="term" value="P:regulation of nitrogen utilization"/>
    <property type="evidence" value="ECO:0007669"/>
    <property type="project" value="InterPro"/>
</dbReference>
<dbReference type="FunFam" id="3.30.70.120:FF:000001">
    <property type="entry name" value="Nitrogen regulatory protein P-II"/>
    <property type="match status" value="1"/>
</dbReference>
<dbReference type="Gene3D" id="3.30.70.120">
    <property type="match status" value="1"/>
</dbReference>
<dbReference type="InterPro" id="IPR002187">
    <property type="entry name" value="N-reg_PII"/>
</dbReference>
<dbReference type="InterPro" id="IPR011322">
    <property type="entry name" value="N-reg_PII-like_a/b"/>
</dbReference>
<dbReference type="InterPro" id="IPR015867">
    <property type="entry name" value="N-reg_PII/ATP_PRibTrfase_C"/>
</dbReference>
<dbReference type="InterPro" id="IPR017918">
    <property type="entry name" value="N-reg_PII_CS"/>
</dbReference>
<dbReference type="InterPro" id="IPR002332">
    <property type="entry name" value="N-reg_PII_urydylation_site"/>
</dbReference>
<dbReference type="NCBIfam" id="NF008111">
    <property type="entry name" value="PRK10858.1"/>
    <property type="match status" value="1"/>
</dbReference>
<dbReference type="PANTHER" id="PTHR30115">
    <property type="entry name" value="NITROGEN REGULATORY PROTEIN P-II"/>
    <property type="match status" value="1"/>
</dbReference>
<dbReference type="PANTHER" id="PTHR30115:SF11">
    <property type="entry name" value="NITROGEN REGULATORY PROTEIN P-II HOMOLOG"/>
    <property type="match status" value="1"/>
</dbReference>
<dbReference type="Pfam" id="PF00543">
    <property type="entry name" value="P-II"/>
    <property type="match status" value="1"/>
</dbReference>
<dbReference type="PIRSF" id="PIRSF039144">
    <property type="entry name" value="GlnB"/>
    <property type="match status" value="1"/>
</dbReference>
<dbReference type="PRINTS" id="PR00340">
    <property type="entry name" value="PIIGLNB"/>
</dbReference>
<dbReference type="SMART" id="SM00938">
    <property type="entry name" value="P-II"/>
    <property type="match status" value="1"/>
</dbReference>
<dbReference type="SUPFAM" id="SSF54913">
    <property type="entry name" value="GlnB-like"/>
    <property type="match status" value="1"/>
</dbReference>
<dbReference type="PROSITE" id="PS00638">
    <property type="entry name" value="PII_GLNB_CTER"/>
    <property type="match status" value="1"/>
</dbReference>
<dbReference type="PROSITE" id="PS51343">
    <property type="entry name" value="PII_GLNB_DOM"/>
    <property type="match status" value="1"/>
</dbReference>
<dbReference type="PROSITE" id="PS00496">
    <property type="entry name" value="PII_GLNB_UMP"/>
    <property type="match status" value="1"/>
</dbReference>
<organism>
    <name type="scientific">Escherichia coli O6:H1 (strain CFT073 / ATCC 700928 / UPEC)</name>
    <dbReference type="NCBI Taxonomy" id="199310"/>
    <lineage>
        <taxon>Bacteria</taxon>
        <taxon>Pseudomonadati</taxon>
        <taxon>Pseudomonadota</taxon>
        <taxon>Gammaproteobacteria</taxon>
        <taxon>Enterobacterales</taxon>
        <taxon>Enterobacteriaceae</taxon>
        <taxon>Escherichia</taxon>
    </lineage>
</organism>
<feature type="chain" id="PRO_0000139775" description="Nitrogen regulatory protein P-II 1">
    <location>
        <begin position="1"/>
        <end position="112"/>
    </location>
</feature>
<feature type="modified residue" description="O-UMP-tyrosine" evidence="2">
    <location>
        <position position="51"/>
    </location>
</feature>
<proteinExistence type="inferred from homology"/>
<protein>
    <recommendedName>
        <fullName>Nitrogen regulatory protein P-II 1</fullName>
    </recommendedName>
</protein>
<keyword id="KW-0547">Nucleotide-binding</keyword>
<keyword id="KW-0597">Phosphoprotein</keyword>
<keyword id="KW-1185">Reference proteome</keyword>
<keyword id="KW-0804">Transcription</keyword>
<keyword id="KW-0805">Transcription regulation</keyword>
<name>GLNB_ECOL6</name>
<gene>
    <name type="primary">glnB</name>
    <name type="ordered locus">c3076</name>
</gene>
<comment type="function">
    <text evidence="1">P-II indirectly controls the transcription of the glutamine synthetase gene (GlnA). P-II prevents NR-II-catalyzed conversion of NR-I to NR-I-phosphate, the transcriptional activator of GlnA. When P-II is uridylylated to P-II-UMP, these events are reversed. When the ratio of Gln to 2-ketoglutarate decreases, P-II is uridylylated to P-II-UMP, which causes the deadenylation of glutamine synthetase by GlnE, so activating the enzyme (By similarity).</text>
</comment>
<comment type="subunit">
    <text evidence="1">Homotrimer.</text>
</comment>
<comment type="PTM">
    <text evidence="1">Uridylylated/deuridylylated by GlnD.</text>
</comment>
<comment type="similarity">
    <text evidence="2">Belongs to the P(II) protein family.</text>
</comment>